<gene>
    <name type="primary">udg</name>
    <name type="synonym">ugd</name>
    <name type="ordered locus">PA2022</name>
</gene>
<keyword id="KW-0520">NAD</keyword>
<keyword id="KW-0560">Oxidoreductase</keyword>
<keyword id="KW-1185">Reference proteome</keyword>
<name>UDG_PSEAE</name>
<sequence length="453" mass="49690">MRLCVIGAGYVGLVTAACFAEMGNQVRCVERDRERVARLRRGEMPIYEPGLESILRDQLDAARLTFTASLAEGLADAEVVFIAVGTPCGEDGSADLSHVLAVAEQLGAQLRQACIVVNKSTVPVGTAERVEEIIRLGLARRRKRFRVAVASNPEFLKEGSAVDDFRRPDRVIIGSAETQAGETLRQLYAPFLRNHERVLLMGRREAEFSKYAANAFLATKISFMNEMAGLCALTGVDIEDVRRGMGSDKRIGTHFIYAGCGYGGSCFPKDVRALIRSAEQQGYDSQILRAVEARNARQKELLFETLGELFQGRWQGRTVALWGLAFKPGTDDLREAPSLVLLEALLRHGVRVRAHDPVANAGVAARYPEAVACARLTLHDSPYAAVEGADALVLVTEWKQFRQPDFQKIRGSMRTPLLVDGRNLYAPARMAELGFIYQGIGRPRAGHCKASAA</sequence>
<evidence type="ECO:0000250" key="1">
    <source>
        <dbReference type="UniProtKB" id="Q0P8H3"/>
    </source>
</evidence>
<evidence type="ECO:0000255" key="2"/>
<evidence type="ECO:0000305" key="3"/>
<protein>
    <recommendedName>
        <fullName>UDP-glucose 6-dehydrogenase</fullName>
        <shortName>UDP-Glc dehydrogenase</shortName>
        <shortName>UDP-GlcDH</shortName>
        <shortName>UDPGDH</shortName>
        <ecNumber>1.1.1.22</ecNumber>
    </recommendedName>
</protein>
<comment type="catalytic activity">
    <reaction>
        <text>UDP-alpha-D-glucose + 2 NAD(+) + H2O = UDP-alpha-D-glucuronate + 2 NADH + 3 H(+)</text>
        <dbReference type="Rhea" id="RHEA:23596"/>
        <dbReference type="ChEBI" id="CHEBI:15377"/>
        <dbReference type="ChEBI" id="CHEBI:15378"/>
        <dbReference type="ChEBI" id="CHEBI:57540"/>
        <dbReference type="ChEBI" id="CHEBI:57945"/>
        <dbReference type="ChEBI" id="CHEBI:58052"/>
        <dbReference type="ChEBI" id="CHEBI:58885"/>
        <dbReference type="EC" id="1.1.1.22"/>
    </reaction>
</comment>
<comment type="pathway">
    <text>Nucleotide-sugar biosynthesis; UDP-alpha-D-glucuronate biosynthesis; UDP-alpha-D-glucuronate from UDP-alpha-D-glucose: step 1/1.</text>
</comment>
<comment type="pathway">
    <text>Bacterial outer membrane biogenesis; lipopolysaccharide biosynthesis.</text>
</comment>
<comment type="similarity">
    <text evidence="3">Belongs to the UDP-glucose/GDP-mannose dehydrogenase family.</text>
</comment>
<comment type="sequence caution" evidence="3">
    <conflict type="frameshift">
        <sequence resource="EMBL-CDS" id="CAA09327"/>
    </conflict>
</comment>
<feature type="chain" id="PRO_0000074049" description="UDP-glucose 6-dehydrogenase">
    <location>
        <begin position="1"/>
        <end position="453"/>
    </location>
</feature>
<feature type="active site" description="Nucleophile" evidence="1">
    <location>
        <position position="266"/>
    </location>
</feature>
<feature type="binding site" evidence="2">
    <location>
        <begin position="2"/>
        <end position="19"/>
    </location>
    <ligand>
        <name>NAD(+)</name>
        <dbReference type="ChEBI" id="CHEBI:57540"/>
    </ligand>
</feature>
<feature type="binding site" evidence="1">
    <location>
        <position position="11"/>
    </location>
    <ligand>
        <name>NAD(+)</name>
        <dbReference type="ChEBI" id="CHEBI:57540"/>
    </ligand>
</feature>
<feature type="binding site" evidence="1">
    <location>
        <position position="121"/>
    </location>
    <ligand>
        <name>NAD(+)</name>
        <dbReference type="ChEBI" id="CHEBI:57540"/>
    </ligand>
</feature>
<feature type="binding site" evidence="1">
    <location>
        <begin position="154"/>
        <end position="158"/>
    </location>
    <ligand>
        <name>substrate</name>
    </ligand>
</feature>
<feature type="binding site" evidence="1">
    <location>
        <position position="158"/>
    </location>
    <ligand>
        <name>NAD(+)</name>
        <dbReference type="ChEBI" id="CHEBI:57540"/>
    </ligand>
</feature>
<feature type="binding site" evidence="1">
    <location>
        <position position="210"/>
    </location>
    <ligand>
        <name>substrate</name>
    </ligand>
</feature>
<feature type="binding site" evidence="1">
    <location>
        <position position="214"/>
    </location>
    <ligand>
        <name>substrate</name>
    </ligand>
</feature>
<feature type="binding site" evidence="1">
    <location>
        <begin position="255"/>
        <end position="259"/>
    </location>
    <ligand>
        <name>substrate</name>
    </ligand>
</feature>
<feature type="binding site" evidence="1">
    <location>
        <position position="263"/>
    </location>
    <ligand>
        <name>substrate</name>
    </ligand>
</feature>
<feature type="binding site" evidence="1">
    <location>
        <position position="269"/>
    </location>
    <ligand>
        <name>NAD(+)</name>
        <dbReference type="ChEBI" id="CHEBI:57540"/>
    </ligand>
</feature>
<feature type="binding site" evidence="1">
    <location>
        <position position="327"/>
    </location>
    <ligand>
        <name>substrate</name>
    </ligand>
</feature>
<feature type="binding site" evidence="1">
    <location>
        <position position="334"/>
    </location>
    <ligand>
        <name>NAD(+)</name>
        <dbReference type="ChEBI" id="CHEBI:57540"/>
    </ligand>
</feature>
<feature type="sequence conflict" description="In Ref. 1; CAA09327." evidence="3" ref="1">
    <original>F</original>
    <variation>L</variation>
    <location>
        <position position="81"/>
    </location>
</feature>
<feature type="sequence conflict" description="In Ref. 1; CAA09327." evidence="3" ref="1">
    <original>A</original>
    <variation>R</variation>
    <location>
        <position position="453"/>
    </location>
</feature>
<dbReference type="EC" id="1.1.1.22"/>
<dbReference type="EMBL" id="AJ010734">
    <property type="protein sequence ID" value="CAA09327.1"/>
    <property type="status" value="ALT_FRAME"/>
    <property type="molecule type" value="Genomic_DNA"/>
</dbReference>
<dbReference type="EMBL" id="AE004091">
    <property type="protein sequence ID" value="AAG05410.1"/>
    <property type="molecule type" value="Genomic_DNA"/>
</dbReference>
<dbReference type="PIR" id="H83393">
    <property type="entry name" value="H83393"/>
</dbReference>
<dbReference type="RefSeq" id="NP_250712.1">
    <property type="nucleotide sequence ID" value="NC_002516.2"/>
</dbReference>
<dbReference type="RefSeq" id="WP_003113510.1">
    <property type="nucleotide sequence ID" value="NZ_QZGE01000026.1"/>
</dbReference>
<dbReference type="SMR" id="O86422"/>
<dbReference type="FunCoup" id="O86422">
    <property type="interactions" value="351"/>
</dbReference>
<dbReference type="STRING" id="208964.PA2022"/>
<dbReference type="PaxDb" id="208964-PA2022"/>
<dbReference type="GeneID" id="879866"/>
<dbReference type="KEGG" id="pae:PA2022"/>
<dbReference type="PATRIC" id="fig|208964.12.peg.2107"/>
<dbReference type="PseudoCAP" id="PA2022"/>
<dbReference type="HOGENOM" id="CLU_023810_1_2_6"/>
<dbReference type="InParanoid" id="O86422"/>
<dbReference type="OrthoDB" id="9803238at2"/>
<dbReference type="PhylomeDB" id="O86422"/>
<dbReference type="BioCyc" id="PAER208964:G1FZ6-2060-MONOMER"/>
<dbReference type="BRENDA" id="1.1.1.22">
    <property type="organism ID" value="5087"/>
</dbReference>
<dbReference type="UniPathway" id="UPA00030"/>
<dbReference type="UniPathway" id="UPA00038">
    <property type="reaction ID" value="UER00491"/>
</dbReference>
<dbReference type="Proteomes" id="UP000002438">
    <property type="component" value="Chromosome"/>
</dbReference>
<dbReference type="GO" id="GO:0051287">
    <property type="term" value="F:NAD binding"/>
    <property type="evidence" value="ECO:0000250"/>
    <property type="project" value="UniProtKB"/>
</dbReference>
<dbReference type="GO" id="GO:0003979">
    <property type="term" value="F:UDP-glucose 6-dehydrogenase activity"/>
    <property type="evidence" value="ECO:0000250"/>
    <property type="project" value="UniProtKB"/>
</dbReference>
<dbReference type="GO" id="GO:0009103">
    <property type="term" value="P:lipopolysaccharide biosynthetic process"/>
    <property type="evidence" value="ECO:0007669"/>
    <property type="project" value="UniProtKB-UniPathway"/>
</dbReference>
<dbReference type="GO" id="GO:0006065">
    <property type="term" value="P:UDP-glucuronate biosynthetic process"/>
    <property type="evidence" value="ECO:0007669"/>
    <property type="project" value="UniProtKB-UniPathway"/>
</dbReference>
<dbReference type="Gene3D" id="1.20.5.100">
    <property type="entry name" value="Cytochrome c1, transmembrane anchor, C-terminal"/>
    <property type="match status" value="1"/>
</dbReference>
<dbReference type="Gene3D" id="3.40.50.720">
    <property type="entry name" value="NAD(P)-binding Rossmann-like Domain"/>
    <property type="match status" value="2"/>
</dbReference>
<dbReference type="InterPro" id="IPR008927">
    <property type="entry name" value="6-PGluconate_DH-like_C_sf"/>
</dbReference>
<dbReference type="InterPro" id="IPR036291">
    <property type="entry name" value="NAD(P)-bd_dom_sf"/>
</dbReference>
<dbReference type="InterPro" id="IPR017476">
    <property type="entry name" value="UDP-Glc/GDP-Man"/>
</dbReference>
<dbReference type="InterPro" id="IPR014027">
    <property type="entry name" value="UDP-Glc/GDP-Man_DH_C"/>
</dbReference>
<dbReference type="InterPro" id="IPR036220">
    <property type="entry name" value="UDP-Glc/GDP-Man_DH_C_sf"/>
</dbReference>
<dbReference type="InterPro" id="IPR014026">
    <property type="entry name" value="UDP-Glc/GDP-Man_DH_dimer"/>
</dbReference>
<dbReference type="InterPro" id="IPR001732">
    <property type="entry name" value="UDP-Glc/GDP-Man_DH_N"/>
</dbReference>
<dbReference type="InterPro" id="IPR028357">
    <property type="entry name" value="UDPglc_DH_bac"/>
</dbReference>
<dbReference type="NCBIfam" id="TIGR03026">
    <property type="entry name" value="NDP-sugDHase"/>
    <property type="match status" value="1"/>
</dbReference>
<dbReference type="PANTHER" id="PTHR43750">
    <property type="entry name" value="UDP-GLUCOSE 6-DEHYDROGENASE TUAD"/>
    <property type="match status" value="1"/>
</dbReference>
<dbReference type="PANTHER" id="PTHR43750:SF3">
    <property type="entry name" value="UDP-GLUCOSE 6-DEHYDROGENASE TUAD"/>
    <property type="match status" value="1"/>
</dbReference>
<dbReference type="Pfam" id="PF00984">
    <property type="entry name" value="UDPG_MGDP_dh"/>
    <property type="match status" value="1"/>
</dbReference>
<dbReference type="Pfam" id="PF03720">
    <property type="entry name" value="UDPG_MGDP_dh_C"/>
    <property type="match status" value="1"/>
</dbReference>
<dbReference type="Pfam" id="PF03721">
    <property type="entry name" value="UDPG_MGDP_dh_N"/>
    <property type="match status" value="1"/>
</dbReference>
<dbReference type="PIRSF" id="PIRSF500134">
    <property type="entry name" value="UDPglc_DH_bac"/>
    <property type="match status" value="1"/>
</dbReference>
<dbReference type="PIRSF" id="PIRSF000124">
    <property type="entry name" value="UDPglc_GDPman_dh"/>
    <property type="match status" value="1"/>
</dbReference>
<dbReference type="SMART" id="SM00984">
    <property type="entry name" value="UDPG_MGDP_dh_C"/>
    <property type="match status" value="1"/>
</dbReference>
<dbReference type="SUPFAM" id="SSF48179">
    <property type="entry name" value="6-phosphogluconate dehydrogenase C-terminal domain-like"/>
    <property type="match status" value="1"/>
</dbReference>
<dbReference type="SUPFAM" id="SSF51735">
    <property type="entry name" value="NAD(P)-binding Rossmann-fold domains"/>
    <property type="match status" value="1"/>
</dbReference>
<dbReference type="SUPFAM" id="SSF52413">
    <property type="entry name" value="UDP-glucose/GDP-mannose dehydrogenase C-terminal domain"/>
    <property type="match status" value="1"/>
</dbReference>
<proteinExistence type="inferred from homology"/>
<accession>O86422</accession>
<accession>Q9I292</accession>
<organism>
    <name type="scientific">Pseudomonas aeruginosa (strain ATCC 15692 / DSM 22644 / CIP 104116 / JCM 14847 / LMG 12228 / 1C / PRS 101 / PAO1)</name>
    <dbReference type="NCBI Taxonomy" id="208964"/>
    <lineage>
        <taxon>Bacteria</taxon>
        <taxon>Pseudomonadati</taxon>
        <taxon>Pseudomonadota</taxon>
        <taxon>Gammaproteobacteria</taxon>
        <taxon>Pseudomonadales</taxon>
        <taxon>Pseudomonadaceae</taxon>
        <taxon>Pseudomonas</taxon>
    </lineage>
</organism>
<reference key="1">
    <citation type="submission" date="1998-08" db="EMBL/GenBank/DDBJ databases">
        <title>Organization of UDP glucose dehydrogenase and UDP glucose pyrophosphorylase gene cluster in Pseudomonas aeruginosa PAO1.</title>
        <authorList>
            <person name="Peng H.L."/>
            <person name="Chang J.T."/>
            <person name="Lee J.H."/>
            <person name="Chang H.Y."/>
        </authorList>
    </citation>
    <scope>NUCLEOTIDE SEQUENCE [GENOMIC DNA]</scope>
    <source>
        <strain>ATCC 15692 / DSM 22644 / CIP 104116 / JCM 14847 / LMG 12228 / 1C / PRS 101 / PAO1</strain>
    </source>
</reference>
<reference key="2">
    <citation type="journal article" date="2000" name="Nature">
        <title>Complete genome sequence of Pseudomonas aeruginosa PAO1, an opportunistic pathogen.</title>
        <authorList>
            <person name="Stover C.K."/>
            <person name="Pham X.-Q.T."/>
            <person name="Erwin A.L."/>
            <person name="Mizoguchi S.D."/>
            <person name="Warrener P."/>
            <person name="Hickey M.J."/>
            <person name="Brinkman F.S.L."/>
            <person name="Hufnagle W.O."/>
            <person name="Kowalik D.J."/>
            <person name="Lagrou M."/>
            <person name="Garber R.L."/>
            <person name="Goltry L."/>
            <person name="Tolentino E."/>
            <person name="Westbrock-Wadman S."/>
            <person name="Yuan Y."/>
            <person name="Brody L.L."/>
            <person name="Coulter S.N."/>
            <person name="Folger K.R."/>
            <person name="Kas A."/>
            <person name="Larbig K."/>
            <person name="Lim R.M."/>
            <person name="Smith K.A."/>
            <person name="Spencer D.H."/>
            <person name="Wong G.K.-S."/>
            <person name="Wu Z."/>
            <person name="Paulsen I.T."/>
            <person name="Reizer J."/>
            <person name="Saier M.H. Jr."/>
            <person name="Hancock R.E.W."/>
            <person name="Lory S."/>
            <person name="Olson M.V."/>
        </authorList>
    </citation>
    <scope>NUCLEOTIDE SEQUENCE [LARGE SCALE GENOMIC DNA]</scope>
    <source>
        <strain>ATCC 15692 / DSM 22644 / CIP 104116 / JCM 14847 / LMG 12228 / 1C / PRS 101 / PAO1</strain>
    </source>
</reference>